<proteinExistence type="inferred from homology"/>
<dbReference type="EC" id="1.2.1.41" evidence="1"/>
<dbReference type="EMBL" id="CP000699">
    <property type="protein sequence ID" value="ABQ68696.1"/>
    <property type="molecule type" value="Genomic_DNA"/>
</dbReference>
<dbReference type="SMR" id="A5V8T0"/>
<dbReference type="STRING" id="392499.Swit_2337"/>
<dbReference type="PaxDb" id="392499-Swit_2337"/>
<dbReference type="KEGG" id="swi:Swit_2337"/>
<dbReference type="eggNOG" id="COG0014">
    <property type="taxonomic scope" value="Bacteria"/>
</dbReference>
<dbReference type="HOGENOM" id="CLU_030231_0_0_5"/>
<dbReference type="OrthoDB" id="9809970at2"/>
<dbReference type="UniPathway" id="UPA00098">
    <property type="reaction ID" value="UER00360"/>
</dbReference>
<dbReference type="Proteomes" id="UP000001989">
    <property type="component" value="Chromosome"/>
</dbReference>
<dbReference type="GO" id="GO:0005737">
    <property type="term" value="C:cytoplasm"/>
    <property type="evidence" value="ECO:0007669"/>
    <property type="project" value="UniProtKB-SubCell"/>
</dbReference>
<dbReference type="GO" id="GO:0004350">
    <property type="term" value="F:glutamate-5-semialdehyde dehydrogenase activity"/>
    <property type="evidence" value="ECO:0007669"/>
    <property type="project" value="UniProtKB-UniRule"/>
</dbReference>
<dbReference type="GO" id="GO:0050661">
    <property type="term" value="F:NADP binding"/>
    <property type="evidence" value="ECO:0007669"/>
    <property type="project" value="InterPro"/>
</dbReference>
<dbReference type="GO" id="GO:0055129">
    <property type="term" value="P:L-proline biosynthetic process"/>
    <property type="evidence" value="ECO:0007669"/>
    <property type="project" value="UniProtKB-UniRule"/>
</dbReference>
<dbReference type="CDD" id="cd07079">
    <property type="entry name" value="ALDH_F18-19_ProA-GPR"/>
    <property type="match status" value="1"/>
</dbReference>
<dbReference type="Gene3D" id="3.40.605.10">
    <property type="entry name" value="Aldehyde Dehydrogenase, Chain A, domain 1"/>
    <property type="match status" value="1"/>
</dbReference>
<dbReference type="Gene3D" id="3.40.309.10">
    <property type="entry name" value="Aldehyde Dehydrogenase, Chain A, domain 2"/>
    <property type="match status" value="1"/>
</dbReference>
<dbReference type="HAMAP" id="MF_00412">
    <property type="entry name" value="ProA"/>
    <property type="match status" value="1"/>
</dbReference>
<dbReference type="InterPro" id="IPR016161">
    <property type="entry name" value="Ald_DH/histidinol_DH"/>
</dbReference>
<dbReference type="InterPro" id="IPR016163">
    <property type="entry name" value="Ald_DH_C"/>
</dbReference>
<dbReference type="InterPro" id="IPR016162">
    <property type="entry name" value="Ald_DH_N"/>
</dbReference>
<dbReference type="InterPro" id="IPR015590">
    <property type="entry name" value="Aldehyde_DH_dom"/>
</dbReference>
<dbReference type="InterPro" id="IPR020593">
    <property type="entry name" value="G-glutamylP_reductase_CS"/>
</dbReference>
<dbReference type="InterPro" id="IPR012134">
    <property type="entry name" value="Glu-5-SA_DH"/>
</dbReference>
<dbReference type="InterPro" id="IPR000965">
    <property type="entry name" value="GPR_dom"/>
</dbReference>
<dbReference type="NCBIfam" id="NF001221">
    <property type="entry name" value="PRK00197.1"/>
    <property type="match status" value="1"/>
</dbReference>
<dbReference type="NCBIfam" id="TIGR00407">
    <property type="entry name" value="proA"/>
    <property type="match status" value="1"/>
</dbReference>
<dbReference type="PANTHER" id="PTHR11063:SF8">
    <property type="entry name" value="DELTA-1-PYRROLINE-5-CARBOXYLATE SYNTHASE"/>
    <property type="match status" value="1"/>
</dbReference>
<dbReference type="PANTHER" id="PTHR11063">
    <property type="entry name" value="GLUTAMATE SEMIALDEHYDE DEHYDROGENASE"/>
    <property type="match status" value="1"/>
</dbReference>
<dbReference type="Pfam" id="PF00171">
    <property type="entry name" value="Aldedh"/>
    <property type="match status" value="1"/>
</dbReference>
<dbReference type="PIRSF" id="PIRSF000151">
    <property type="entry name" value="GPR"/>
    <property type="match status" value="1"/>
</dbReference>
<dbReference type="SUPFAM" id="SSF53720">
    <property type="entry name" value="ALDH-like"/>
    <property type="match status" value="1"/>
</dbReference>
<dbReference type="PROSITE" id="PS01223">
    <property type="entry name" value="PROA"/>
    <property type="match status" value="1"/>
</dbReference>
<gene>
    <name evidence="1" type="primary">proA</name>
    <name type="ordered locus">Swit_2337</name>
</gene>
<feature type="chain" id="PRO_1000049994" description="Gamma-glutamyl phosphate reductase">
    <location>
        <begin position="1"/>
        <end position="429"/>
    </location>
</feature>
<organism>
    <name type="scientific">Rhizorhabdus wittichii (strain DSM 6014 / CCUG 31198 / JCM 15750 / NBRC 105917 / EY 4224 / RW1)</name>
    <name type="common">Sphingomonas wittichii</name>
    <dbReference type="NCBI Taxonomy" id="392499"/>
    <lineage>
        <taxon>Bacteria</taxon>
        <taxon>Pseudomonadati</taxon>
        <taxon>Pseudomonadota</taxon>
        <taxon>Alphaproteobacteria</taxon>
        <taxon>Sphingomonadales</taxon>
        <taxon>Sphingomonadaceae</taxon>
        <taxon>Rhizorhabdus</taxon>
    </lineage>
</organism>
<comment type="function">
    <text evidence="1">Catalyzes the NADPH-dependent reduction of L-glutamate 5-phosphate into L-glutamate 5-semialdehyde and phosphate. The product spontaneously undergoes cyclization to form 1-pyrroline-5-carboxylate.</text>
</comment>
<comment type="catalytic activity">
    <reaction evidence="1">
        <text>L-glutamate 5-semialdehyde + phosphate + NADP(+) = L-glutamyl 5-phosphate + NADPH + H(+)</text>
        <dbReference type="Rhea" id="RHEA:19541"/>
        <dbReference type="ChEBI" id="CHEBI:15378"/>
        <dbReference type="ChEBI" id="CHEBI:43474"/>
        <dbReference type="ChEBI" id="CHEBI:57783"/>
        <dbReference type="ChEBI" id="CHEBI:58066"/>
        <dbReference type="ChEBI" id="CHEBI:58274"/>
        <dbReference type="ChEBI" id="CHEBI:58349"/>
        <dbReference type="EC" id="1.2.1.41"/>
    </reaction>
</comment>
<comment type="pathway">
    <text evidence="1">Amino-acid biosynthesis; L-proline biosynthesis; L-glutamate 5-semialdehyde from L-glutamate: step 2/2.</text>
</comment>
<comment type="subcellular location">
    <subcellularLocation>
        <location evidence="1">Cytoplasm</location>
    </subcellularLocation>
</comment>
<comment type="similarity">
    <text evidence="1">Belongs to the gamma-glutamyl phosphate reductase family.</text>
</comment>
<reference key="1">
    <citation type="journal article" date="2010" name="J. Bacteriol.">
        <title>Genome sequence of the dioxin-mineralizing bacterium Sphingomonas wittichii RW1.</title>
        <authorList>
            <person name="Miller T.R."/>
            <person name="Delcher A.L."/>
            <person name="Salzberg S.L."/>
            <person name="Saunders E."/>
            <person name="Detter J.C."/>
            <person name="Halden R.U."/>
        </authorList>
    </citation>
    <scope>NUCLEOTIDE SEQUENCE [LARGE SCALE GENOMIC DNA]</scope>
    <source>
        <strain>DSM 6014 / CCUG 31198 / JCM 15750 / NBRC 105917 / EY 4224 / RW1</strain>
    </source>
</reference>
<protein>
    <recommendedName>
        <fullName evidence="1">Gamma-glutamyl phosphate reductase</fullName>
        <shortName evidence="1">GPR</shortName>
        <ecNumber evidence="1">1.2.1.41</ecNumber>
    </recommendedName>
    <alternativeName>
        <fullName evidence="1">Glutamate-5-semialdehyde dehydrogenase</fullName>
    </alternativeName>
    <alternativeName>
        <fullName evidence="1">Glutamyl-gamma-semialdehyde dehydrogenase</fullName>
        <shortName evidence="1">GSA dehydrogenase</shortName>
    </alternativeName>
</protein>
<evidence type="ECO:0000255" key="1">
    <source>
        <dbReference type="HAMAP-Rule" id="MF_00412"/>
    </source>
</evidence>
<name>PROA_RHIWR</name>
<accession>A5V8T0</accession>
<sequence length="429" mass="44275">MTETLAIRPTDAAKDSGALIADMGARARAAAVRLAGAPTADKAKALVEAAKAIRARAAAILAANAEDVARAQANGLTAAMIDRLTLDPARLEGVAAGLEAVAALPDPVGQRIDETRRPNGLLLQRVRVPLGVIGIIYESRPNVTADAGALSLMSGNACILRGGSEATASNRAIHAALLDGIRAAGLPEDAIQLVPTTDRAAVGAMLAAQGLIDIIVPRGGKSLVARVQDEARVPVLAHLDGIVHLYIDRAADPAKAVPLAVNAKMRRTGVCGATETLLIDRAYGDPATIVGALVEAGCEVRGDADARAIDDRVLPAADSDWDCEYLDSILSVAIVDGVDGAMAHIARHSSHHTDAIVTEDQPTADRFLAGVDSAIVMHNASTQFADGGEFGLGAEIGISTGRLHARGPVALEGLTTYKWLVRGEGQLRP</sequence>
<keyword id="KW-0028">Amino-acid biosynthesis</keyword>
<keyword id="KW-0963">Cytoplasm</keyword>
<keyword id="KW-0521">NADP</keyword>
<keyword id="KW-0560">Oxidoreductase</keyword>
<keyword id="KW-0641">Proline biosynthesis</keyword>
<keyword id="KW-1185">Reference proteome</keyword>